<comment type="function">
    <text evidence="4">Dendrite-specific motor protein which, in association with the Apba1-containing complex (LIN-10-LIN-2-LIN-7 complex), transports vesicles containing N-methyl-D-aspartate (NMDA) receptor subunit NR2B along microtubules.</text>
</comment>
<comment type="subunit">
    <text evidence="4 5 6 7">Homodimer (PubMed:10846156). Interacts with APBA1 (via PDZ domain); the interaction is direct and is required for association of KIF17 with the cargo that is to be transported (PubMed:10846156). Interacts with IFT B complex components IFT52 and IFT57 (PubMed:23810713). Interacts with IFT70B (PubMed:23810713). Interacts with PIWIL1 (PubMed:16787948). Interacts with TBATA (PubMed:17196196).</text>
</comment>
<comment type="interaction">
    <interactant intactId="EBI-959754">
        <id>Q99PW8</id>
    </interactant>
    <interactant intactId="EBI-959779">
        <id>Q9Z0V2</id>
        <label>Kcnd2</label>
    </interactant>
    <organismsDiffer>false</organismsDiffer>
    <experiments>3</experiments>
</comment>
<comment type="subcellular location">
    <subcellularLocation>
        <location evidence="4">Cytoplasm</location>
        <location evidence="4">Cytoskeleton</location>
    </subcellularLocation>
    <subcellularLocation>
        <location evidence="8">Cell projection</location>
        <location evidence="8">Cilium</location>
    </subcellularLocation>
    <subcellularLocation>
        <location evidence="4">Cell projection</location>
        <location evidence="4">Dendrite</location>
    </subcellularLocation>
    <text evidence="4">Localizes to dendrites of pyramidal neurons (PubMed:10846156). Does not localize to the axons or nuclei in cerebral cortex, hippocampus or olfactory bulb (PubMed:10846156). Co-localizes with NR2B-containing vesicles along microtubules (PubMed:10846156).</text>
</comment>
<comment type="tissue specificity">
    <text evidence="4">Highly expressed in the gray matter of the brain, especially in the hippocampus.</text>
</comment>
<comment type="developmental stage">
    <text evidence="4">Expressed from embryonic day 16, and expression increases to postnatal week 3.</text>
</comment>
<comment type="similarity">
    <text evidence="2">Belongs to the TRAFAC class myosin-kinesin ATPase superfamily. Kinesin family.</text>
</comment>
<dbReference type="EMBL" id="AB008867">
    <property type="protein sequence ID" value="BAB21099.1"/>
    <property type="molecule type" value="mRNA"/>
</dbReference>
<dbReference type="EMBL" id="AL807249">
    <property type="status" value="NOT_ANNOTATED_CDS"/>
    <property type="molecule type" value="Genomic_DNA"/>
</dbReference>
<dbReference type="CCDS" id="CCDS18823.1"/>
<dbReference type="RefSeq" id="NP_034753.1">
    <property type="nucleotide sequence ID" value="NM_010623.4"/>
</dbReference>
<dbReference type="SMR" id="Q99PW8"/>
<dbReference type="BioGRID" id="200934">
    <property type="interactions" value="5"/>
</dbReference>
<dbReference type="CORUM" id="Q99PW8"/>
<dbReference type="DIP" id="DIP-36586N"/>
<dbReference type="FunCoup" id="Q99PW8">
    <property type="interactions" value="85"/>
</dbReference>
<dbReference type="IntAct" id="Q99PW8">
    <property type="interactions" value="2"/>
</dbReference>
<dbReference type="MINT" id="Q99PW8"/>
<dbReference type="STRING" id="10090.ENSMUSP00000030539"/>
<dbReference type="iPTMnet" id="Q99PW8"/>
<dbReference type="PhosphoSitePlus" id="Q99PW8"/>
<dbReference type="SwissPalm" id="Q99PW8"/>
<dbReference type="PaxDb" id="10090-ENSMUSP00000030539"/>
<dbReference type="ProteomicsDB" id="263444"/>
<dbReference type="Pumba" id="Q99PW8"/>
<dbReference type="Antibodypedia" id="15106">
    <property type="antibodies" value="123 antibodies from 22 providers"/>
</dbReference>
<dbReference type="DNASU" id="16559"/>
<dbReference type="Ensembl" id="ENSMUST00000030539.10">
    <property type="protein sequence ID" value="ENSMUSP00000030539.4"/>
    <property type="gene ID" value="ENSMUSG00000028758.13"/>
</dbReference>
<dbReference type="GeneID" id="16559"/>
<dbReference type="KEGG" id="mmu:16559"/>
<dbReference type="UCSC" id="uc008vkq.2">
    <property type="organism name" value="mouse"/>
</dbReference>
<dbReference type="AGR" id="MGI:1098229"/>
<dbReference type="CTD" id="57576"/>
<dbReference type="MGI" id="MGI:1098229">
    <property type="gene designation" value="Kif17"/>
</dbReference>
<dbReference type="VEuPathDB" id="HostDB:ENSMUSG00000028758"/>
<dbReference type="eggNOG" id="KOG0239">
    <property type="taxonomic scope" value="Eukaryota"/>
</dbReference>
<dbReference type="GeneTree" id="ENSGT00940000158776"/>
<dbReference type="HOGENOM" id="CLU_001485_22_0_1"/>
<dbReference type="InParanoid" id="Q99PW8"/>
<dbReference type="OMA" id="QCKTGAF"/>
<dbReference type="OrthoDB" id="3176171at2759"/>
<dbReference type="PhylomeDB" id="Q99PW8"/>
<dbReference type="TreeFam" id="TF105223"/>
<dbReference type="Reactome" id="R-MMU-5620924">
    <property type="pathway name" value="Intraflagellar transport"/>
</dbReference>
<dbReference type="BioGRID-ORCS" id="16559">
    <property type="hits" value="6 hits in 77 CRISPR screens"/>
</dbReference>
<dbReference type="CD-CODE" id="CE726F99">
    <property type="entry name" value="Postsynaptic density"/>
</dbReference>
<dbReference type="ChiTaRS" id="Kif17">
    <property type="organism name" value="mouse"/>
</dbReference>
<dbReference type="PRO" id="PR:Q99PW8"/>
<dbReference type="Proteomes" id="UP000000589">
    <property type="component" value="Chromosome 4"/>
</dbReference>
<dbReference type="RNAct" id="Q99PW8">
    <property type="molecule type" value="protein"/>
</dbReference>
<dbReference type="Bgee" id="ENSMUSG00000028758">
    <property type="expression patterns" value="Expressed in primary oocyte and 70 other cell types or tissues"/>
</dbReference>
<dbReference type="ExpressionAtlas" id="Q99PW8">
    <property type="expression patterns" value="baseline and differential"/>
</dbReference>
<dbReference type="GO" id="GO:0005930">
    <property type="term" value="C:axoneme"/>
    <property type="evidence" value="ECO:0000314"/>
    <property type="project" value="MGI"/>
</dbReference>
<dbReference type="GO" id="GO:0036064">
    <property type="term" value="C:ciliary basal body"/>
    <property type="evidence" value="ECO:0000314"/>
    <property type="project" value="MGI"/>
</dbReference>
<dbReference type="GO" id="GO:0005929">
    <property type="term" value="C:cilium"/>
    <property type="evidence" value="ECO:0000314"/>
    <property type="project" value="UniProtKB"/>
</dbReference>
<dbReference type="GO" id="GO:0005829">
    <property type="term" value="C:cytosol"/>
    <property type="evidence" value="ECO:0000304"/>
    <property type="project" value="Reactome"/>
</dbReference>
<dbReference type="GO" id="GO:0032839">
    <property type="term" value="C:dendrite cytoplasm"/>
    <property type="evidence" value="ECO:0007669"/>
    <property type="project" value="GOC"/>
</dbReference>
<dbReference type="GO" id="GO:0005871">
    <property type="term" value="C:kinesin complex"/>
    <property type="evidence" value="ECO:0000314"/>
    <property type="project" value="MGI"/>
</dbReference>
<dbReference type="GO" id="GO:0005874">
    <property type="term" value="C:microtubule"/>
    <property type="evidence" value="ECO:0007669"/>
    <property type="project" value="UniProtKB-KW"/>
</dbReference>
<dbReference type="GO" id="GO:0015630">
    <property type="term" value="C:microtubule cytoskeleton"/>
    <property type="evidence" value="ECO:0000314"/>
    <property type="project" value="MGI"/>
</dbReference>
<dbReference type="GO" id="GO:1990075">
    <property type="term" value="C:periciliary membrane compartment"/>
    <property type="evidence" value="ECO:0000314"/>
    <property type="project" value="MGI"/>
</dbReference>
<dbReference type="GO" id="GO:0032391">
    <property type="term" value="C:photoreceptor connecting cilium"/>
    <property type="evidence" value="ECO:0000314"/>
    <property type="project" value="MGI"/>
</dbReference>
<dbReference type="GO" id="GO:0001917">
    <property type="term" value="C:photoreceptor inner segment"/>
    <property type="evidence" value="ECO:0000314"/>
    <property type="project" value="MGI"/>
</dbReference>
<dbReference type="GO" id="GO:0001750">
    <property type="term" value="C:photoreceptor outer segment"/>
    <property type="evidence" value="ECO:0000314"/>
    <property type="project" value="MGI"/>
</dbReference>
<dbReference type="GO" id="GO:0098794">
    <property type="term" value="C:postsynapse"/>
    <property type="evidence" value="ECO:0000314"/>
    <property type="project" value="SynGO"/>
</dbReference>
<dbReference type="GO" id="GO:0005524">
    <property type="term" value="F:ATP binding"/>
    <property type="evidence" value="ECO:0007669"/>
    <property type="project" value="UniProtKB-KW"/>
</dbReference>
<dbReference type="GO" id="GO:0008017">
    <property type="term" value="F:microtubule binding"/>
    <property type="evidence" value="ECO:0007669"/>
    <property type="project" value="InterPro"/>
</dbReference>
<dbReference type="GO" id="GO:0003777">
    <property type="term" value="F:microtubule motor activity"/>
    <property type="evidence" value="ECO:0000314"/>
    <property type="project" value="MGI"/>
</dbReference>
<dbReference type="GO" id="GO:0098971">
    <property type="term" value="P:anterograde dendritic transport of neurotransmitter receptor complex"/>
    <property type="evidence" value="ECO:0000314"/>
    <property type="project" value="SynGO"/>
</dbReference>
<dbReference type="GO" id="GO:0042073">
    <property type="term" value="P:intraciliary transport"/>
    <property type="evidence" value="ECO:0000305"/>
    <property type="project" value="MGI"/>
</dbReference>
<dbReference type="GO" id="GO:0007017">
    <property type="term" value="P:microtubule-based process"/>
    <property type="evidence" value="ECO:0000314"/>
    <property type="project" value="MGI"/>
</dbReference>
<dbReference type="GO" id="GO:0015031">
    <property type="term" value="P:protein transport"/>
    <property type="evidence" value="ECO:0007669"/>
    <property type="project" value="UniProtKB-KW"/>
</dbReference>
<dbReference type="GO" id="GO:0031503">
    <property type="term" value="P:protein-containing complex localization"/>
    <property type="evidence" value="ECO:0000315"/>
    <property type="project" value="MGI"/>
</dbReference>
<dbReference type="GO" id="GO:0016192">
    <property type="term" value="P:vesicle-mediated transport"/>
    <property type="evidence" value="ECO:0000314"/>
    <property type="project" value="MGI"/>
</dbReference>
<dbReference type="FunFam" id="3.40.850.10:FF:000029">
    <property type="entry name" value="Kinesin-like protein KIF17"/>
    <property type="match status" value="1"/>
</dbReference>
<dbReference type="Gene3D" id="3.40.850.10">
    <property type="entry name" value="Kinesin motor domain"/>
    <property type="match status" value="1"/>
</dbReference>
<dbReference type="InterPro" id="IPR027640">
    <property type="entry name" value="Kinesin-like_fam"/>
</dbReference>
<dbReference type="InterPro" id="IPR019821">
    <property type="entry name" value="Kinesin_motor_CS"/>
</dbReference>
<dbReference type="InterPro" id="IPR001752">
    <property type="entry name" value="Kinesin_motor_dom"/>
</dbReference>
<dbReference type="InterPro" id="IPR036961">
    <property type="entry name" value="Kinesin_motor_dom_sf"/>
</dbReference>
<dbReference type="InterPro" id="IPR027417">
    <property type="entry name" value="P-loop_NTPase"/>
</dbReference>
<dbReference type="PANTHER" id="PTHR47969">
    <property type="entry name" value="CHROMOSOME-ASSOCIATED KINESIN KIF4A-RELATED"/>
    <property type="match status" value="1"/>
</dbReference>
<dbReference type="PANTHER" id="PTHR47969:SF21">
    <property type="entry name" value="KINESIN-LIKE PROTEIN"/>
    <property type="match status" value="1"/>
</dbReference>
<dbReference type="Pfam" id="PF00225">
    <property type="entry name" value="Kinesin"/>
    <property type="match status" value="1"/>
</dbReference>
<dbReference type="PRINTS" id="PR00380">
    <property type="entry name" value="KINESINHEAVY"/>
</dbReference>
<dbReference type="SMART" id="SM00129">
    <property type="entry name" value="KISc"/>
    <property type="match status" value="1"/>
</dbReference>
<dbReference type="SUPFAM" id="SSF52540">
    <property type="entry name" value="P-loop containing nucleoside triphosphate hydrolases"/>
    <property type="match status" value="1"/>
</dbReference>
<dbReference type="PROSITE" id="PS00411">
    <property type="entry name" value="KINESIN_MOTOR_1"/>
    <property type="match status" value="1"/>
</dbReference>
<dbReference type="PROSITE" id="PS50067">
    <property type="entry name" value="KINESIN_MOTOR_2"/>
    <property type="match status" value="1"/>
</dbReference>
<proteinExistence type="evidence at protein level"/>
<organism>
    <name type="scientific">Mus musculus</name>
    <name type="common">Mouse</name>
    <dbReference type="NCBI Taxonomy" id="10090"/>
    <lineage>
        <taxon>Eukaryota</taxon>
        <taxon>Metazoa</taxon>
        <taxon>Chordata</taxon>
        <taxon>Craniata</taxon>
        <taxon>Vertebrata</taxon>
        <taxon>Euteleostomi</taxon>
        <taxon>Mammalia</taxon>
        <taxon>Eutheria</taxon>
        <taxon>Euarchontoglires</taxon>
        <taxon>Glires</taxon>
        <taxon>Rodentia</taxon>
        <taxon>Myomorpha</taxon>
        <taxon>Muroidea</taxon>
        <taxon>Muridae</taxon>
        <taxon>Murinae</taxon>
        <taxon>Mus</taxon>
        <taxon>Mus</taxon>
    </lineage>
</organism>
<evidence type="ECO:0000255" key="1"/>
<evidence type="ECO:0000255" key="2">
    <source>
        <dbReference type="PROSITE-ProRule" id="PRU00283"/>
    </source>
</evidence>
<evidence type="ECO:0000256" key="3">
    <source>
        <dbReference type="SAM" id="MobiDB-lite"/>
    </source>
</evidence>
<evidence type="ECO:0000269" key="4">
    <source>
    </source>
</evidence>
<evidence type="ECO:0000269" key="5">
    <source>
    </source>
</evidence>
<evidence type="ECO:0000269" key="6">
    <source>
    </source>
</evidence>
<evidence type="ECO:0000269" key="7">
    <source>
    </source>
</evidence>
<evidence type="ECO:0000269" key="8">
    <source>
    </source>
</evidence>
<reference key="1">
    <citation type="journal article" date="2000" name="Science">
        <title>Kinesin superfamily motor protein KIF17 and mLin-10 in NMDA receptor-containing vesicle transport.</title>
        <authorList>
            <person name="Setou M."/>
            <person name="Nakagawa T."/>
            <person name="Seog D.-H."/>
            <person name="Hirokawa N."/>
        </authorList>
    </citation>
    <scope>NUCLEOTIDE SEQUENCE [MRNA]</scope>
    <scope>FUNCTION</scope>
    <scope>SUBUNIT</scope>
    <scope>INTERACTION WITH APBA1</scope>
    <scope>SUBCELLULAR LOCATION</scope>
    <scope>TISSUE SPECIFICITY</scope>
    <scope>DEVELOPMENTAL STAGE</scope>
    <scope>MUTAGENESIS OF 939-MET--LEU-1038</scope>
    <source>
        <tissue>Brain</tissue>
    </source>
</reference>
<reference key="2">
    <citation type="journal article" date="2009" name="PLoS Biol.">
        <title>Lineage-specific biology revealed by a finished genome assembly of the mouse.</title>
        <authorList>
            <person name="Church D.M."/>
            <person name="Goodstadt L."/>
            <person name="Hillier L.W."/>
            <person name="Zody M.C."/>
            <person name="Goldstein S."/>
            <person name="She X."/>
            <person name="Bult C.J."/>
            <person name="Agarwala R."/>
            <person name="Cherry J.L."/>
            <person name="DiCuccio M."/>
            <person name="Hlavina W."/>
            <person name="Kapustin Y."/>
            <person name="Meric P."/>
            <person name="Maglott D."/>
            <person name="Birtle Z."/>
            <person name="Marques A.C."/>
            <person name="Graves T."/>
            <person name="Zhou S."/>
            <person name="Teague B."/>
            <person name="Potamousis K."/>
            <person name="Churas C."/>
            <person name="Place M."/>
            <person name="Herschleb J."/>
            <person name="Runnheim R."/>
            <person name="Forrest D."/>
            <person name="Amos-Landgraf J."/>
            <person name="Schwartz D.C."/>
            <person name="Cheng Z."/>
            <person name="Lindblad-Toh K."/>
            <person name="Eichler E.E."/>
            <person name="Ponting C.P."/>
        </authorList>
    </citation>
    <scope>NUCLEOTIDE SEQUENCE [LARGE SCALE GENOMIC DNA]</scope>
    <source>
        <strain>C57BL/6J</strain>
    </source>
</reference>
<reference key="3">
    <citation type="journal article" date="2006" name="J. Cell Sci.">
        <title>Interplay of PIWI/Argonaute protein MIWI and kinesin KIF17b in chromatoid bodies of male germ cells.</title>
        <authorList>
            <person name="Kotaja N."/>
            <person name="Lin H."/>
            <person name="Parvinen M."/>
            <person name="Sassone-Corsi P."/>
        </authorList>
    </citation>
    <scope>INTERACTION WITH PIWIL1</scope>
</reference>
<reference key="4">
    <citation type="journal article" date="2007" name="Exp. Cell Res.">
        <title>Dynamic distribution of Spatial during mouse spermatogenesis and its interaction with the kinesin KIF17b.</title>
        <authorList>
            <person name="Saade M."/>
            <person name="Irla M."/>
            <person name="Govin J."/>
            <person name="Victorero G."/>
            <person name="Samson M."/>
            <person name="Nguyen C."/>
        </authorList>
    </citation>
    <scope>INTERACTION WITH TBATA</scope>
</reference>
<reference key="5">
    <citation type="journal article" date="2010" name="Cell">
        <title>A tissue-specific atlas of mouse protein phosphorylation and expression.</title>
        <authorList>
            <person name="Huttlin E.L."/>
            <person name="Jedrychowski M.P."/>
            <person name="Elias J.E."/>
            <person name="Goswami T."/>
            <person name="Rad R."/>
            <person name="Beausoleil S.A."/>
            <person name="Villen J."/>
            <person name="Haas W."/>
            <person name="Sowa M.E."/>
            <person name="Gygi S.P."/>
        </authorList>
    </citation>
    <scope>IDENTIFICATION BY MASS SPECTROMETRY [LARGE SCALE ANALYSIS]</scope>
    <source>
        <tissue>Testis</tissue>
    </source>
</reference>
<reference key="6">
    <citation type="journal article" date="2013" name="Exp. Cell Res.">
        <title>Interaction of mouse TTC30/DYF-1 with multiple intraflagellar transport complex B proteins and KIF17.</title>
        <authorList>
            <person name="Howard P.W."/>
            <person name="Jue S.F."/>
            <person name="Maurer R.A."/>
        </authorList>
    </citation>
    <scope>INTERACTION WITH IFT52; IFT57 AND IFT70B</scope>
</reference>
<reference key="7">
    <citation type="journal article" date="2014" name="PLoS ONE">
        <title>Regulation of cilium length and intraflagellar transport by the RCK-kinases ICK and MOK in renal epithelial cells.</title>
        <authorList>
            <person name="Broekhuis J.R."/>
            <person name="Verhey K.J."/>
            <person name="Jansen G."/>
        </authorList>
    </citation>
    <scope>SUBCELLULAR LOCATION</scope>
</reference>
<protein>
    <recommendedName>
        <fullName>Kinesin-like protein KIF17</fullName>
        <shortName>MmKIF17</shortName>
    </recommendedName>
</protein>
<feature type="chain" id="PRO_0000125451" description="Kinesin-like protein KIF17">
    <location>
        <begin position="1"/>
        <end position="1038"/>
    </location>
</feature>
<feature type="domain" description="Kinesin motor" evidence="2">
    <location>
        <begin position="5"/>
        <end position="335"/>
    </location>
</feature>
<feature type="region of interest" description="Disordered" evidence="3">
    <location>
        <begin position="379"/>
        <end position="401"/>
    </location>
</feature>
<feature type="region of interest" description="Disordered" evidence="3">
    <location>
        <begin position="503"/>
        <end position="559"/>
    </location>
</feature>
<feature type="region of interest" description="Disordered" evidence="3">
    <location>
        <begin position="636"/>
        <end position="657"/>
    </location>
</feature>
<feature type="region of interest" description="Disordered" evidence="3">
    <location>
        <begin position="916"/>
        <end position="940"/>
    </location>
</feature>
<feature type="region of interest" description="Disordered" evidence="3">
    <location>
        <begin position="976"/>
        <end position="1038"/>
    </location>
</feature>
<feature type="coiled-coil region" evidence="1">
    <location>
        <begin position="346"/>
        <end position="470"/>
    </location>
</feature>
<feature type="coiled-coil region" evidence="1">
    <location>
        <begin position="748"/>
        <end position="855"/>
    </location>
</feature>
<feature type="compositionally biased region" description="Polar residues" evidence="3">
    <location>
        <begin position="533"/>
        <end position="551"/>
    </location>
</feature>
<feature type="compositionally biased region" description="Polar residues" evidence="3">
    <location>
        <begin position="636"/>
        <end position="651"/>
    </location>
</feature>
<feature type="compositionally biased region" description="Low complexity" evidence="3">
    <location>
        <begin position="983"/>
        <end position="1000"/>
    </location>
</feature>
<feature type="binding site" evidence="2">
    <location>
        <begin position="91"/>
        <end position="98"/>
    </location>
    <ligand>
        <name>ATP</name>
        <dbReference type="ChEBI" id="CHEBI:30616"/>
    </ligand>
</feature>
<feature type="mutagenesis site" description="Abolishes interaction with APBA1. Abolishes transport of vesicles containing N-methyl-D-aspartate (NMDA) receptor subunit NR2B along microtubules." evidence="4">
    <location>
        <begin position="939"/>
        <end position="1038"/>
    </location>
</feature>
<gene>
    <name type="primary">Kif17</name>
</gene>
<keyword id="KW-0067">ATP-binding</keyword>
<keyword id="KW-0966">Cell projection</keyword>
<keyword id="KW-0175">Coiled coil</keyword>
<keyword id="KW-0963">Cytoplasm</keyword>
<keyword id="KW-0206">Cytoskeleton</keyword>
<keyword id="KW-0493">Microtubule</keyword>
<keyword id="KW-0505">Motor protein</keyword>
<keyword id="KW-0547">Nucleotide-binding</keyword>
<keyword id="KW-0653">Protein transport</keyword>
<keyword id="KW-1185">Reference proteome</keyword>
<keyword id="KW-0813">Transport</keyword>
<accession>Q99PW8</accession>
<accession>A2AM73</accession>
<sequence length="1038" mass="116373">MASESVKVVVRCRPMNKRERELSCQSVVTVDSARGQCFIQNPGAADEPPKQFTFDGAYYIEHFTEQIYNEIAYPLVEGVTEGYNGTIFAYGQTGSGKSFTMQGLPDPPCQRGIIPRAFEHVFESVQCAENTKFLVRASYLEIYNEDVHDLLGADTKQRLELKEHPEKGVYVKGLSMHTVHNVAQCERVMETGWKNRAVGYTLMNKDSSRSHSIFTINIEIYAVDERGKDHLRAGKLNLVDLAGSERQSKTGATGERLKEATKINLSLSALGNVISALVDGRCKHIPYRDSKLTRLLQDSLGGNTKTLMVACLSPADNNYDETLSTLRYANRAKNIKNKPRINEDPKDALLREYQEEIKRLKAILAQQMGPGNLSALLSTQTPPGPVQSEEKLLSPTTVQQDTEAEKQLIREEYEERLARLKADYEAEQESRVRLQEDITAMRNSYDVKLSTLQENLRKEKETEAILKAEVLCKTEVMSRAELASGPEYSPPLQYETAVKPTILSMPDMPPSGKVTKSQAPLAFEEPHGETSRSEFSFESNECSTLEDSATSEAFPGPEEFSNMEFSMAAALTESRYLPEEYLGGQEAAASPLEAERYVQENEPSLEPLRILASLQDPFAEVEAKLARLSSTVAMSDSSQTVVPQIPKQPSSADLLEPSDTKSEADVAVADNVVLGTEPDVNLRVAEEVVSEAETGVWMESEAQVAHVAQVSEEAQPQPLLAMVSVRRESVGVEVAVLTEEELQPVDQQQVLARLQLLEQQVVGGEQAKNKDLREKHKRRKRYADERKKQLVAALQNSDEDGGDWVLLNVYDSIQEEVRAKSKLLEKMQRKLRAAEVEIKDLQSEFQLEKIDYLATIRRQERDSMLFQQLLEQVQPLIRRDCNYSNLEKIRRESSWDEDNGFWKIPDPIILKTSLPVVPTGTQNKPARKTSAVDSGEPHMQEEDRYKLMLSRSDSENIASNYFRSKRASQILSTDPMKSLTYHNSPPGLNSSLSNNSALPPTQTPEMPQPRPFRLESLDIPFSKAKRKKSKNSFGGEPL</sequence>
<name>KIF17_MOUSE</name>